<protein>
    <recommendedName>
        <fullName>Protein Brevis radix-like 1</fullName>
        <shortName>OsBRXL1</shortName>
    </recommendedName>
</protein>
<gene>
    <name type="primary">BRXL1</name>
    <name type="ordered locus">Os08g0462700</name>
    <name type="ordered locus">LOC_Os08g36020</name>
    <name type="ORF">B1111C03.19</name>
    <name type="ORF">B1116H04.7</name>
    <name type="ORF">OsJ_27591</name>
</gene>
<evidence type="ECO:0000250" key="1"/>
<evidence type="ECO:0000255" key="2">
    <source>
        <dbReference type="PROSITE-ProRule" id="PRU00847"/>
    </source>
</evidence>
<evidence type="ECO:0000256" key="3">
    <source>
        <dbReference type="SAM" id="MobiDB-lite"/>
    </source>
</evidence>
<evidence type="ECO:0000305" key="4"/>
<reference key="1">
    <citation type="journal article" date="2005" name="Nature">
        <title>The map-based sequence of the rice genome.</title>
        <authorList>
            <consortium name="International rice genome sequencing project (IRGSP)"/>
        </authorList>
    </citation>
    <scope>NUCLEOTIDE SEQUENCE [LARGE SCALE GENOMIC DNA]</scope>
    <source>
        <strain>cv. Nipponbare</strain>
    </source>
</reference>
<reference key="2">
    <citation type="journal article" date="2008" name="Nucleic Acids Res.">
        <title>The rice annotation project database (RAP-DB): 2008 update.</title>
        <authorList>
            <consortium name="The rice annotation project (RAP)"/>
        </authorList>
    </citation>
    <scope>GENOME REANNOTATION</scope>
    <source>
        <strain>cv. Nipponbare</strain>
    </source>
</reference>
<reference key="3">
    <citation type="journal article" date="2013" name="Rice">
        <title>Improvement of the Oryza sativa Nipponbare reference genome using next generation sequence and optical map data.</title>
        <authorList>
            <person name="Kawahara Y."/>
            <person name="de la Bastide M."/>
            <person name="Hamilton J.P."/>
            <person name="Kanamori H."/>
            <person name="McCombie W.R."/>
            <person name="Ouyang S."/>
            <person name="Schwartz D.C."/>
            <person name="Tanaka T."/>
            <person name="Wu J."/>
            <person name="Zhou S."/>
            <person name="Childs K.L."/>
            <person name="Davidson R.M."/>
            <person name="Lin H."/>
            <person name="Quesada-Ocampo L."/>
            <person name="Vaillancourt B."/>
            <person name="Sakai H."/>
            <person name="Lee S.S."/>
            <person name="Kim J."/>
            <person name="Numa H."/>
            <person name="Itoh T."/>
            <person name="Buell C.R."/>
            <person name="Matsumoto T."/>
        </authorList>
    </citation>
    <scope>GENOME REANNOTATION</scope>
    <source>
        <strain>cv. Nipponbare</strain>
    </source>
</reference>
<reference key="4">
    <citation type="journal article" date="2005" name="PLoS Biol.">
        <title>The genomes of Oryza sativa: a history of duplications.</title>
        <authorList>
            <person name="Yu J."/>
            <person name="Wang J."/>
            <person name="Lin W."/>
            <person name="Li S."/>
            <person name="Li H."/>
            <person name="Zhou J."/>
            <person name="Ni P."/>
            <person name="Dong W."/>
            <person name="Hu S."/>
            <person name="Zeng C."/>
            <person name="Zhang J."/>
            <person name="Zhang Y."/>
            <person name="Li R."/>
            <person name="Xu Z."/>
            <person name="Li S."/>
            <person name="Li X."/>
            <person name="Zheng H."/>
            <person name="Cong L."/>
            <person name="Lin L."/>
            <person name="Yin J."/>
            <person name="Geng J."/>
            <person name="Li G."/>
            <person name="Shi J."/>
            <person name="Liu J."/>
            <person name="Lv H."/>
            <person name="Li J."/>
            <person name="Wang J."/>
            <person name="Deng Y."/>
            <person name="Ran L."/>
            <person name="Shi X."/>
            <person name="Wang X."/>
            <person name="Wu Q."/>
            <person name="Li C."/>
            <person name="Ren X."/>
            <person name="Wang J."/>
            <person name="Wang X."/>
            <person name="Li D."/>
            <person name="Liu D."/>
            <person name="Zhang X."/>
            <person name="Ji Z."/>
            <person name="Zhao W."/>
            <person name="Sun Y."/>
            <person name="Zhang Z."/>
            <person name="Bao J."/>
            <person name="Han Y."/>
            <person name="Dong L."/>
            <person name="Ji J."/>
            <person name="Chen P."/>
            <person name="Wu S."/>
            <person name="Liu J."/>
            <person name="Xiao Y."/>
            <person name="Bu D."/>
            <person name="Tan J."/>
            <person name="Yang L."/>
            <person name="Ye C."/>
            <person name="Zhang J."/>
            <person name="Xu J."/>
            <person name="Zhou Y."/>
            <person name="Yu Y."/>
            <person name="Zhang B."/>
            <person name="Zhuang S."/>
            <person name="Wei H."/>
            <person name="Liu B."/>
            <person name="Lei M."/>
            <person name="Yu H."/>
            <person name="Li Y."/>
            <person name="Xu H."/>
            <person name="Wei S."/>
            <person name="He X."/>
            <person name="Fang L."/>
            <person name="Zhang Z."/>
            <person name="Zhang Y."/>
            <person name="Huang X."/>
            <person name="Su Z."/>
            <person name="Tong W."/>
            <person name="Li J."/>
            <person name="Tong Z."/>
            <person name="Li S."/>
            <person name="Ye J."/>
            <person name="Wang L."/>
            <person name="Fang L."/>
            <person name="Lei T."/>
            <person name="Chen C.-S."/>
            <person name="Chen H.-C."/>
            <person name="Xu Z."/>
            <person name="Li H."/>
            <person name="Huang H."/>
            <person name="Zhang F."/>
            <person name="Xu H."/>
            <person name="Li N."/>
            <person name="Zhao C."/>
            <person name="Li S."/>
            <person name="Dong L."/>
            <person name="Huang Y."/>
            <person name="Li L."/>
            <person name="Xi Y."/>
            <person name="Qi Q."/>
            <person name="Li W."/>
            <person name="Zhang B."/>
            <person name="Hu W."/>
            <person name="Zhang Y."/>
            <person name="Tian X."/>
            <person name="Jiao Y."/>
            <person name="Liang X."/>
            <person name="Jin J."/>
            <person name="Gao L."/>
            <person name="Zheng W."/>
            <person name="Hao B."/>
            <person name="Liu S.-M."/>
            <person name="Wang W."/>
            <person name="Yuan L."/>
            <person name="Cao M."/>
            <person name="McDermott J."/>
            <person name="Samudrala R."/>
            <person name="Wang J."/>
            <person name="Wong G.K.-S."/>
            <person name="Yang H."/>
        </authorList>
    </citation>
    <scope>NUCLEOTIDE SEQUENCE [LARGE SCALE GENOMIC DNA]</scope>
    <source>
        <strain>cv. Nipponbare</strain>
    </source>
</reference>
<reference key="5">
    <citation type="journal article" date="2003" name="Science">
        <title>Collection, mapping, and annotation of over 28,000 cDNA clones from japonica rice.</title>
        <authorList>
            <consortium name="The rice full-length cDNA consortium"/>
        </authorList>
    </citation>
    <scope>NUCLEOTIDE SEQUENCE [LARGE SCALE MRNA]</scope>
    <source>
        <strain>cv. Nipponbare</strain>
    </source>
</reference>
<reference key="6">
    <citation type="journal article" date="2006" name="Plant Physiol.">
        <title>Characterization of the plant-specific BREVIS RADIX gene family reveals limited genetic redundancy despite high sequence conservation.</title>
        <authorList>
            <person name="Briggs G.C."/>
            <person name="Mouchel C.F."/>
            <person name="Hardtke C.S."/>
        </authorList>
    </citation>
    <scope>GENE FAMILY</scope>
</reference>
<proteinExistence type="evidence at transcript level"/>
<feature type="chain" id="PRO_0000373826" description="Protein Brevis radix-like 1">
    <location>
        <begin position="1"/>
        <end position="397"/>
    </location>
</feature>
<feature type="domain" description="BRX 1" evidence="2">
    <location>
        <begin position="150"/>
        <end position="205"/>
    </location>
</feature>
<feature type="domain" description="BRX 2" evidence="2">
    <location>
        <begin position="342"/>
        <end position="397"/>
    </location>
</feature>
<feature type="region of interest" description="Disordered" evidence="3">
    <location>
        <begin position="14"/>
        <end position="37"/>
    </location>
</feature>
<feature type="region of interest" description="Disordered" evidence="3">
    <location>
        <begin position="105"/>
        <end position="148"/>
    </location>
</feature>
<feature type="region of interest" description="Disordered" evidence="3">
    <location>
        <begin position="212"/>
        <end position="278"/>
    </location>
</feature>
<feature type="region of interest" description="Disordered" evidence="3">
    <location>
        <begin position="300"/>
        <end position="342"/>
    </location>
</feature>
<feature type="compositionally biased region" description="Acidic residues" evidence="3">
    <location>
        <begin position="124"/>
        <end position="148"/>
    </location>
</feature>
<feature type="compositionally biased region" description="Basic and acidic residues" evidence="3">
    <location>
        <begin position="220"/>
        <end position="230"/>
    </location>
</feature>
<feature type="compositionally biased region" description="Low complexity" evidence="3">
    <location>
        <begin position="309"/>
        <end position="320"/>
    </location>
</feature>
<dbReference type="EMBL" id="AP005405">
    <property type="protein sequence ID" value="BAD10306.1"/>
    <property type="molecule type" value="Genomic_DNA"/>
</dbReference>
<dbReference type="EMBL" id="AP005871">
    <property type="protein sequence ID" value="BAD10682.1"/>
    <property type="molecule type" value="Genomic_DNA"/>
</dbReference>
<dbReference type="EMBL" id="AP008214">
    <property type="protein sequence ID" value="BAF23900.1"/>
    <property type="molecule type" value="Genomic_DNA"/>
</dbReference>
<dbReference type="EMBL" id="AP014964">
    <property type="protein sequence ID" value="BAT05778.1"/>
    <property type="molecule type" value="Genomic_DNA"/>
</dbReference>
<dbReference type="EMBL" id="CM000145">
    <property type="protein sequence ID" value="EAZ43004.1"/>
    <property type="molecule type" value="Genomic_DNA"/>
</dbReference>
<dbReference type="EMBL" id="AK103661">
    <property type="protein sequence ID" value="BAG96195.1"/>
    <property type="molecule type" value="mRNA"/>
</dbReference>
<dbReference type="EMBL" id="AK122163">
    <property type="protein sequence ID" value="BAH00829.1"/>
    <property type="molecule type" value="mRNA"/>
</dbReference>
<dbReference type="RefSeq" id="XP_015648970.1">
    <property type="nucleotide sequence ID" value="XM_015793484.1"/>
</dbReference>
<dbReference type="SMR" id="Q6YUB8"/>
<dbReference type="FunCoup" id="Q6YUB8">
    <property type="interactions" value="1964"/>
</dbReference>
<dbReference type="PaxDb" id="39947-Q6YUB8"/>
<dbReference type="EnsemblPlants" id="Os08t0462700-01">
    <property type="protein sequence ID" value="Os08t0462700-01"/>
    <property type="gene ID" value="Os08g0462700"/>
</dbReference>
<dbReference type="Gramene" id="Os08t0462700-01">
    <property type="protein sequence ID" value="Os08t0462700-01"/>
    <property type="gene ID" value="Os08g0462700"/>
</dbReference>
<dbReference type="KEGG" id="dosa:Os08g0462700"/>
<dbReference type="eggNOG" id="ENOG502QTYG">
    <property type="taxonomic scope" value="Eukaryota"/>
</dbReference>
<dbReference type="HOGENOM" id="CLU_033380_0_1_1"/>
<dbReference type="InParanoid" id="Q6YUB8"/>
<dbReference type="OMA" id="PYHAYAD"/>
<dbReference type="OrthoDB" id="10250282at2759"/>
<dbReference type="PlantReactome" id="R-OSA-9826782">
    <property type="pathway name" value="Regulation of seed germination and coleoptile growth under submergence and normal gravity environment"/>
</dbReference>
<dbReference type="Proteomes" id="UP000000763">
    <property type="component" value="Chromosome 8"/>
</dbReference>
<dbReference type="Proteomes" id="UP000007752">
    <property type="component" value="Chromosome 8"/>
</dbReference>
<dbReference type="Proteomes" id="UP000059680">
    <property type="component" value="Chromosome 8"/>
</dbReference>
<dbReference type="GO" id="GO:0005634">
    <property type="term" value="C:nucleus"/>
    <property type="evidence" value="ECO:0007669"/>
    <property type="project" value="UniProtKB-SubCell"/>
</dbReference>
<dbReference type="InterPro" id="IPR013591">
    <property type="entry name" value="Brevis_radix_dom"/>
</dbReference>
<dbReference type="InterPro" id="IPR044532">
    <property type="entry name" value="BRX-like"/>
</dbReference>
<dbReference type="InterPro" id="IPR027988">
    <property type="entry name" value="BRX_N"/>
</dbReference>
<dbReference type="PANTHER" id="PTHR46058">
    <property type="entry name" value="PROTEIN BREVIS RADIX-LIKE 1"/>
    <property type="match status" value="1"/>
</dbReference>
<dbReference type="PANTHER" id="PTHR46058:SF2">
    <property type="entry name" value="PROTEIN BREVIS RADIX-LIKE 3"/>
    <property type="match status" value="1"/>
</dbReference>
<dbReference type="Pfam" id="PF08381">
    <property type="entry name" value="BRX"/>
    <property type="match status" value="2"/>
</dbReference>
<dbReference type="Pfam" id="PF13713">
    <property type="entry name" value="BRX_N"/>
    <property type="match status" value="1"/>
</dbReference>
<dbReference type="PROSITE" id="PS51514">
    <property type="entry name" value="BRX"/>
    <property type="match status" value="2"/>
</dbReference>
<comment type="subcellular location">
    <subcellularLocation>
        <location evidence="1">Nucleus</location>
    </subcellularLocation>
</comment>
<comment type="similarity">
    <text evidence="4">Belongs to the BRX family.</text>
</comment>
<keyword id="KW-0539">Nucleus</keyword>
<keyword id="KW-1185">Reference proteome</keyword>
<keyword id="KW-0677">Repeat</keyword>
<accession>Q6YUB8</accession>
<accession>A0A0N7KPZ3</accession>
<sequence length="397" mass="44031">MLTCIACSKQLAGGAPPLREQSDDADDAAVARGAGECATPSTRQAIKALTAQIKDMALKASGAYRHCKPCAGSSSSSPAAGARRHHPYHAYADSGSDRFHYAYRRAGSGGDATPSVSARTDFLAGDEEEEEEEEEEEGTTADGSEDDEAKEWVAQVEPGVLITFLSLPEGGNDLKRIRFSREIFNKWQAQRWWAENYEKVMELYNVQRFNQQTPLPTTPKSEDESLKEDIPATPPLNSERLPHTLHRSLTGGRTTGYGQPDSLGHQHNLGNGHRQQHHHCYTGHQCYGSVGLASTPKLSSISGAKTETSSMDASMRSSSSPEEVDRSRELSVSVSNASDQEREWVEEDEPGVYITIRALPGGIRELRRVRFSREKFSEMHARLWWEENRARIHDQYL</sequence>
<organism>
    <name type="scientific">Oryza sativa subsp. japonica</name>
    <name type="common">Rice</name>
    <dbReference type="NCBI Taxonomy" id="39947"/>
    <lineage>
        <taxon>Eukaryota</taxon>
        <taxon>Viridiplantae</taxon>
        <taxon>Streptophyta</taxon>
        <taxon>Embryophyta</taxon>
        <taxon>Tracheophyta</taxon>
        <taxon>Spermatophyta</taxon>
        <taxon>Magnoliopsida</taxon>
        <taxon>Liliopsida</taxon>
        <taxon>Poales</taxon>
        <taxon>Poaceae</taxon>
        <taxon>BOP clade</taxon>
        <taxon>Oryzoideae</taxon>
        <taxon>Oryzeae</taxon>
        <taxon>Oryzinae</taxon>
        <taxon>Oryza</taxon>
        <taxon>Oryza sativa</taxon>
    </lineage>
</organism>
<name>BRXL1_ORYSJ</name>